<gene>
    <name type="primary">zntA</name>
    <name type="ORF">DDB_0237957</name>
</gene>
<name>ZNTA_DICDI</name>
<proteinExistence type="evidence at transcript level"/>
<feature type="signal peptide" evidence="2">
    <location>
        <begin position="1"/>
        <end position="18"/>
    </location>
</feature>
<feature type="chain" id="PRO_0000386634" description="Protein zntA">
    <location>
        <begin position="19"/>
        <end position="507"/>
    </location>
</feature>
<feature type="transmembrane region" description="Helical" evidence="2">
    <location>
        <begin position="35"/>
        <end position="55"/>
    </location>
</feature>
<feature type="transmembrane region" description="Helical" evidence="2">
    <location>
        <begin position="185"/>
        <end position="205"/>
    </location>
</feature>
<feature type="transmembrane region" description="Helical" evidence="2">
    <location>
        <begin position="355"/>
        <end position="375"/>
    </location>
</feature>
<feature type="transmembrane region" description="Helical" evidence="2">
    <location>
        <begin position="388"/>
        <end position="408"/>
    </location>
</feature>
<feature type="transmembrane region" description="Helical" evidence="2">
    <location>
        <begin position="422"/>
        <end position="442"/>
    </location>
</feature>
<feature type="transmembrane region" description="Helical" evidence="2">
    <location>
        <begin position="451"/>
        <end position="471"/>
    </location>
</feature>
<feature type="transmembrane region" description="Helical" evidence="2">
    <location>
        <begin position="486"/>
        <end position="506"/>
    </location>
</feature>
<feature type="region of interest" description="Disordered" evidence="3">
    <location>
        <begin position="124"/>
        <end position="179"/>
    </location>
</feature>
<feature type="region of interest" description="Disordered" evidence="3">
    <location>
        <begin position="209"/>
        <end position="264"/>
    </location>
</feature>
<feature type="region of interest" description="Disordered" evidence="3">
    <location>
        <begin position="305"/>
        <end position="350"/>
    </location>
</feature>
<feature type="compositionally biased region" description="Low complexity" evidence="3">
    <location>
        <begin position="125"/>
        <end position="137"/>
    </location>
</feature>
<feature type="compositionally biased region" description="Acidic residues" evidence="3">
    <location>
        <begin position="138"/>
        <end position="154"/>
    </location>
</feature>
<feature type="compositionally biased region" description="Basic and acidic residues" evidence="3">
    <location>
        <begin position="155"/>
        <end position="179"/>
    </location>
</feature>
<feature type="compositionally biased region" description="Low complexity" evidence="3">
    <location>
        <begin position="221"/>
        <end position="258"/>
    </location>
</feature>
<feature type="compositionally biased region" description="Basic and acidic residues" evidence="3">
    <location>
        <begin position="317"/>
        <end position="332"/>
    </location>
</feature>
<feature type="compositionally biased region" description="Low complexity" evidence="3">
    <location>
        <begin position="333"/>
        <end position="350"/>
    </location>
</feature>
<feature type="glycosylation site" description="N-linked (GlcNAc...) asparagine" evidence="2">
    <location>
        <position position="31"/>
    </location>
</feature>
<feature type="glycosylation site" description="N-linked (GlcNAc...) asparagine" evidence="2">
    <location>
        <position position="240"/>
    </location>
</feature>
<feature type="glycosylation site" description="N-linked (GlcNAc...) asparagine" evidence="2">
    <location>
        <position position="298"/>
    </location>
</feature>
<feature type="glycosylation site" description="N-linked (GlcNAc...) asparagine" evidence="2">
    <location>
        <position position="328"/>
    </location>
</feature>
<feature type="glycosylation site" description="N-linked (GlcNAc...) asparagine" evidence="2">
    <location>
        <position position="342"/>
    </location>
</feature>
<feature type="glycosylation site" description="N-linked (GlcNAc...) asparagine" evidence="2">
    <location>
        <position position="351"/>
    </location>
</feature>
<reference key="1">
    <citation type="journal article" date="2005" name="Nature">
        <title>The genome of the social amoeba Dictyostelium discoideum.</title>
        <authorList>
            <person name="Eichinger L."/>
            <person name="Pachebat J.A."/>
            <person name="Gloeckner G."/>
            <person name="Rajandream M.A."/>
            <person name="Sucgang R."/>
            <person name="Berriman M."/>
            <person name="Song J."/>
            <person name="Olsen R."/>
            <person name="Szafranski K."/>
            <person name="Xu Q."/>
            <person name="Tunggal B."/>
            <person name="Kummerfeld S."/>
            <person name="Madera M."/>
            <person name="Konfortov B.A."/>
            <person name="Rivero F."/>
            <person name="Bankier A.T."/>
            <person name="Lehmann R."/>
            <person name="Hamlin N."/>
            <person name="Davies R."/>
            <person name="Gaudet P."/>
            <person name="Fey P."/>
            <person name="Pilcher K."/>
            <person name="Chen G."/>
            <person name="Saunders D."/>
            <person name="Sodergren E.J."/>
            <person name="Davis P."/>
            <person name="Kerhornou A."/>
            <person name="Nie X."/>
            <person name="Hall N."/>
            <person name="Anjard C."/>
            <person name="Hemphill L."/>
            <person name="Bason N."/>
            <person name="Farbrother P."/>
            <person name="Desany B."/>
            <person name="Just E."/>
            <person name="Morio T."/>
            <person name="Rost R."/>
            <person name="Churcher C.M."/>
            <person name="Cooper J."/>
            <person name="Haydock S."/>
            <person name="van Driessche N."/>
            <person name="Cronin A."/>
            <person name="Goodhead I."/>
            <person name="Muzny D.M."/>
            <person name="Mourier T."/>
            <person name="Pain A."/>
            <person name="Lu M."/>
            <person name="Harper D."/>
            <person name="Lindsay R."/>
            <person name="Hauser H."/>
            <person name="James K.D."/>
            <person name="Quiles M."/>
            <person name="Madan Babu M."/>
            <person name="Saito T."/>
            <person name="Buchrieser C."/>
            <person name="Wardroper A."/>
            <person name="Felder M."/>
            <person name="Thangavelu M."/>
            <person name="Johnson D."/>
            <person name="Knights A."/>
            <person name="Loulseged H."/>
            <person name="Mungall K.L."/>
            <person name="Oliver K."/>
            <person name="Price C."/>
            <person name="Quail M.A."/>
            <person name="Urushihara H."/>
            <person name="Hernandez J."/>
            <person name="Rabbinowitsch E."/>
            <person name="Steffen D."/>
            <person name="Sanders M."/>
            <person name="Ma J."/>
            <person name="Kohara Y."/>
            <person name="Sharp S."/>
            <person name="Simmonds M.N."/>
            <person name="Spiegler S."/>
            <person name="Tivey A."/>
            <person name="Sugano S."/>
            <person name="White B."/>
            <person name="Walker D."/>
            <person name="Woodward J.R."/>
            <person name="Winckler T."/>
            <person name="Tanaka Y."/>
            <person name="Shaulsky G."/>
            <person name="Schleicher M."/>
            <person name="Weinstock G.M."/>
            <person name="Rosenthal A."/>
            <person name="Cox E.C."/>
            <person name="Chisholm R.L."/>
            <person name="Gibbs R.A."/>
            <person name="Loomis W.F."/>
            <person name="Platzer M."/>
            <person name="Kay R.R."/>
            <person name="Williams J.G."/>
            <person name="Dear P.H."/>
            <person name="Noegel A.A."/>
            <person name="Barrell B.G."/>
            <person name="Kuspa A."/>
        </authorList>
    </citation>
    <scope>NUCLEOTIDE SEQUENCE [LARGE SCALE GENOMIC DNA]</scope>
    <source>
        <strain>AX4</strain>
    </source>
</reference>
<reference key="2">
    <citation type="journal article" date="2008" name="Int. J. Dev. Biol.">
        <title>Expression of zinc transporter family genes in Dictyostelium.</title>
        <authorList>
            <person name="Sunaga N."/>
            <person name="Monna M."/>
            <person name="Shimada N."/>
            <person name="Tsukamoto M."/>
            <person name="Kawata T."/>
        </authorList>
    </citation>
    <scope>DEVELOPMENTAL STAGE</scope>
    <scope>FUNCTION</scope>
    <source>
        <strain>AX2</strain>
    </source>
</reference>
<keyword id="KW-0325">Glycoprotein</keyword>
<keyword id="KW-0406">Ion transport</keyword>
<keyword id="KW-0472">Membrane</keyword>
<keyword id="KW-1185">Reference proteome</keyword>
<keyword id="KW-0732">Signal</keyword>
<keyword id="KW-0812">Transmembrane</keyword>
<keyword id="KW-1133">Transmembrane helix</keyword>
<keyword id="KW-0813">Transport</keyword>
<organism>
    <name type="scientific">Dictyostelium discoideum</name>
    <name type="common">Social amoeba</name>
    <dbReference type="NCBI Taxonomy" id="44689"/>
    <lineage>
        <taxon>Eukaryota</taxon>
        <taxon>Amoebozoa</taxon>
        <taxon>Evosea</taxon>
        <taxon>Eumycetozoa</taxon>
        <taxon>Dictyostelia</taxon>
        <taxon>Dictyosteliales</taxon>
        <taxon>Dictyosteliaceae</taxon>
        <taxon>Dictyostelium</taxon>
    </lineage>
</organism>
<protein>
    <recommendedName>
        <fullName>Protein zntA</fullName>
    </recommendedName>
</protein>
<dbReference type="EMBL" id="AAFI02000003">
    <property type="protein sequence ID" value="EAL73666.2"/>
    <property type="molecule type" value="Genomic_DNA"/>
</dbReference>
<dbReference type="RefSeq" id="XP_647522.2">
    <property type="nucleotide sequence ID" value="XM_642430.2"/>
</dbReference>
<dbReference type="FunCoup" id="Q55FL1">
    <property type="interactions" value="481"/>
</dbReference>
<dbReference type="STRING" id="44689.Q55FL1"/>
<dbReference type="GlyCosmos" id="Q55FL1">
    <property type="glycosylation" value="6 sites, No reported glycans"/>
</dbReference>
<dbReference type="GlyGen" id="Q55FL1">
    <property type="glycosylation" value="6 sites"/>
</dbReference>
<dbReference type="PaxDb" id="44689-DDB0237957"/>
<dbReference type="EnsemblProtists" id="EAL73666">
    <property type="protein sequence ID" value="EAL73666"/>
    <property type="gene ID" value="DDB_G0268426"/>
</dbReference>
<dbReference type="GeneID" id="8616329"/>
<dbReference type="KEGG" id="ddi:DDB_G0268426"/>
<dbReference type="dictyBase" id="DDB_G0268426">
    <property type="gene designation" value="zplG"/>
</dbReference>
<dbReference type="VEuPathDB" id="AmoebaDB:DDB_G0268426"/>
<dbReference type="eggNOG" id="ENOG502R9IA">
    <property type="taxonomic scope" value="Eukaryota"/>
</dbReference>
<dbReference type="HOGENOM" id="CLU_537971_0_0_1"/>
<dbReference type="InParanoid" id="Q55FL1"/>
<dbReference type="OMA" id="LISCMTP"/>
<dbReference type="Reactome" id="R-DDI-442380">
    <property type="pathway name" value="Zinc influx into cells by the SLC39 gene family"/>
</dbReference>
<dbReference type="PRO" id="PR:Q55FL1"/>
<dbReference type="Proteomes" id="UP000002195">
    <property type="component" value="Chromosome 1"/>
</dbReference>
<dbReference type="GO" id="GO:0016020">
    <property type="term" value="C:membrane"/>
    <property type="evidence" value="ECO:0000318"/>
    <property type="project" value="GO_Central"/>
</dbReference>
<dbReference type="GO" id="GO:0005385">
    <property type="term" value="F:zinc ion transmembrane transporter activity"/>
    <property type="evidence" value="ECO:0000318"/>
    <property type="project" value="GO_Central"/>
</dbReference>
<dbReference type="GO" id="GO:0071577">
    <property type="term" value="P:zinc ion transmembrane transport"/>
    <property type="evidence" value="ECO:0000318"/>
    <property type="project" value="GO_Central"/>
</dbReference>
<dbReference type="InterPro" id="IPR003689">
    <property type="entry name" value="ZIP"/>
</dbReference>
<dbReference type="PANTHER" id="PTHR11040:SF198">
    <property type="entry name" value="METAL HOMEOSTASIS FACTOR ATX2"/>
    <property type="match status" value="1"/>
</dbReference>
<dbReference type="PANTHER" id="PTHR11040">
    <property type="entry name" value="ZINC/IRON TRANSPORTER"/>
    <property type="match status" value="1"/>
</dbReference>
<dbReference type="Pfam" id="PF02535">
    <property type="entry name" value="Zip"/>
    <property type="match status" value="1"/>
</dbReference>
<sequence length="507" mass="55173">MSIFAYSILAGLAPLLSSSIPFFTLRNRNINASVFHILLCISAGLLFAVASLELIPESMNLALRSFEESTKTQTSLKSTTTKTTTTTTTIGNIKLQKSFISNSEDSLNEFHSLDNEINKPPIEGLNLNNLNQATNLDNNEEDNDNLDNDGENEIENDHDHDHQEDEGGDNDHDHESEEKKEFLKIPMYGIGFGFAILIIVESIFSSIDGGGGGGGHHSHSHGSLSSSSSNDVISDYISNNNSNNINNNDDDNNNNNNNNDDDDDSVELLERNVVNKDNSNNINNINNNNDDEDIIVINKSIENTPNIASPVMNKDNNNNDKDKNRNSNKSDIKNSGSINNGNNSGNNNNNNKSKLTITTFIALSIHSFVDGVVISSAFSSSPHVGARVALAIVIHKIPDGLVLSSLILSQKKFNSGIFSNPFFYFLLISCMTPLGSFISSFLFGGLSLSSGAFVLGFGAGTFIYITSTAILPEILSNQIVKKSTSLFSIFLGYLLFIFLDSQFHGAH</sequence>
<accession>Q55FL1</accession>
<comment type="function">
    <text evidence="1 4">May transport divalent cations (By similarity). May participate, with dstA, in the regulation of the differentiation of stalk cells during development.</text>
</comment>
<comment type="subcellular location">
    <subcellularLocation>
        <location evidence="5">Membrane</location>
        <topology evidence="5">Multi-pass membrane protein</topology>
    </subcellularLocation>
</comment>
<comment type="developmental stage">
    <text evidence="4">Expressed in the prestalk cell type pstAB, or at the stalk entrance during culmination and slug stage, this expression being weak in the dstA null mutant.</text>
</comment>
<comment type="similarity">
    <text evidence="5">Belongs to the ZIP transporter (TC 2.A.5) family.</text>
</comment>
<evidence type="ECO:0000250" key="1"/>
<evidence type="ECO:0000255" key="2"/>
<evidence type="ECO:0000256" key="3">
    <source>
        <dbReference type="SAM" id="MobiDB-lite"/>
    </source>
</evidence>
<evidence type="ECO:0000269" key="4">
    <source>
    </source>
</evidence>
<evidence type="ECO:0000305" key="5"/>